<dbReference type="EC" id="5.3.1.1" evidence="1"/>
<dbReference type="EMBL" id="CP000051">
    <property type="protein sequence ID" value="AAX50590.1"/>
    <property type="molecule type" value="Genomic_DNA"/>
</dbReference>
<dbReference type="RefSeq" id="WP_011324683.1">
    <property type="nucleotide sequence ID" value="NC_007429.1"/>
</dbReference>
<dbReference type="SMR" id="Q3KM32"/>
<dbReference type="KEGG" id="cta:CTA_0355"/>
<dbReference type="HOGENOM" id="CLU_024251_2_1_0"/>
<dbReference type="UniPathway" id="UPA00109">
    <property type="reaction ID" value="UER00189"/>
</dbReference>
<dbReference type="UniPathway" id="UPA00138"/>
<dbReference type="Proteomes" id="UP000002532">
    <property type="component" value="Chromosome"/>
</dbReference>
<dbReference type="GO" id="GO:0005829">
    <property type="term" value="C:cytosol"/>
    <property type="evidence" value="ECO:0007669"/>
    <property type="project" value="TreeGrafter"/>
</dbReference>
<dbReference type="GO" id="GO:0004807">
    <property type="term" value="F:triose-phosphate isomerase activity"/>
    <property type="evidence" value="ECO:0007669"/>
    <property type="project" value="UniProtKB-UniRule"/>
</dbReference>
<dbReference type="GO" id="GO:0006094">
    <property type="term" value="P:gluconeogenesis"/>
    <property type="evidence" value="ECO:0007669"/>
    <property type="project" value="UniProtKB-UniRule"/>
</dbReference>
<dbReference type="GO" id="GO:0046166">
    <property type="term" value="P:glyceraldehyde-3-phosphate biosynthetic process"/>
    <property type="evidence" value="ECO:0007669"/>
    <property type="project" value="TreeGrafter"/>
</dbReference>
<dbReference type="GO" id="GO:0019563">
    <property type="term" value="P:glycerol catabolic process"/>
    <property type="evidence" value="ECO:0007669"/>
    <property type="project" value="TreeGrafter"/>
</dbReference>
<dbReference type="GO" id="GO:0006096">
    <property type="term" value="P:glycolytic process"/>
    <property type="evidence" value="ECO:0007669"/>
    <property type="project" value="UniProtKB-UniRule"/>
</dbReference>
<dbReference type="CDD" id="cd00311">
    <property type="entry name" value="TIM"/>
    <property type="match status" value="1"/>
</dbReference>
<dbReference type="FunFam" id="3.20.20.70:FF:000016">
    <property type="entry name" value="Triosephosphate isomerase"/>
    <property type="match status" value="1"/>
</dbReference>
<dbReference type="Gene3D" id="3.20.20.70">
    <property type="entry name" value="Aldolase class I"/>
    <property type="match status" value="1"/>
</dbReference>
<dbReference type="HAMAP" id="MF_00147_B">
    <property type="entry name" value="TIM_B"/>
    <property type="match status" value="1"/>
</dbReference>
<dbReference type="InterPro" id="IPR013785">
    <property type="entry name" value="Aldolase_TIM"/>
</dbReference>
<dbReference type="InterPro" id="IPR035990">
    <property type="entry name" value="TIM_sf"/>
</dbReference>
<dbReference type="InterPro" id="IPR022896">
    <property type="entry name" value="TrioseP_Isoase_bac/euk"/>
</dbReference>
<dbReference type="InterPro" id="IPR000652">
    <property type="entry name" value="Triosephosphate_isomerase"/>
</dbReference>
<dbReference type="InterPro" id="IPR020861">
    <property type="entry name" value="Triosephosphate_isomerase_AS"/>
</dbReference>
<dbReference type="NCBIfam" id="TIGR00419">
    <property type="entry name" value="tim"/>
    <property type="match status" value="1"/>
</dbReference>
<dbReference type="PANTHER" id="PTHR21139">
    <property type="entry name" value="TRIOSEPHOSPHATE ISOMERASE"/>
    <property type="match status" value="1"/>
</dbReference>
<dbReference type="PANTHER" id="PTHR21139:SF42">
    <property type="entry name" value="TRIOSEPHOSPHATE ISOMERASE"/>
    <property type="match status" value="1"/>
</dbReference>
<dbReference type="Pfam" id="PF00121">
    <property type="entry name" value="TIM"/>
    <property type="match status" value="1"/>
</dbReference>
<dbReference type="SUPFAM" id="SSF51351">
    <property type="entry name" value="Triosephosphate isomerase (TIM)"/>
    <property type="match status" value="1"/>
</dbReference>
<dbReference type="PROSITE" id="PS00171">
    <property type="entry name" value="TIM_1"/>
    <property type="match status" value="1"/>
</dbReference>
<dbReference type="PROSITE" id="PS51440">
    <property type="entry name" value="TIM_2"/>
    <property type="match status" value="1"/>
</dbReference>
<feature type="chain" id="PRO_0000307444" description="Triosephosphate isomerase">
    <location>
        <begin position="1"/>
        <end position="274"/>
    </location>
</feature>
<feature type="active site" description="Electrophile" evidence="1">
    <location>
        <position position="118"/>
    </location>
</feature>
<feature type="active site" description="Proton acceptor" evidence="1">
    <location>
        <position position="188"/>
    </location>
</feature>
<feature type="binding site" evidence="1">
    <location>
        <begin position="31"/>
        <end position="33"/>
    </location>
    <ligand>
        <name>substrate</name>
    </ligand>
</feature>
<feature type="binding site" evidence="1">
    <location>
        <position position="194"/>
    </location>
    <ligand>
        <name>substrate</name>
    </ligand>
</feature>
<feature type="binding site" evidence="1">
    <location>
        <position position="234"/>
    </location>
    <ligand>
        <name>substrate</name>
    </ligand>
</feature>
<feature type="binding site" evidence="1">
    <location>
        <begin position="255"/>
        <end position="256"/>
    </location>
    <ligand>
        <name>substrate</name>
    </ligand>
</feature>
<gene>
    <name evidence="1" type="primary">tpiA</name>
    <name type="ordered locus">CTA_0355</name>
</gene>
<reference key="1">
    <citation type="journal article" date="2005" name="Infect. Immun.">
        <title>Comparative genomic analysis of Chlamydia trachomatis oculotropic and genitotropic strains.</title>
        <authorList>
            <person name="Carlson J.H."/>
            <person name="Porcella S.F."/>
            <person name="McClarty G."/>
            <person name="Caldwell H.D."/>
        </authorList>
    </citation>
    <scope>NUCLEOTIDE SEQUENCE [LARGE SCALE GENOMIC DNA]</scope>
    <source>
        <strain>ATCC VR-571B / DSM 19440 / HAR-13</strain>
    </source>
</reference>
<comment type="function">
    <text evidence="1">Involved in the gluconeogenesis. Catalyzes stereospecifically the conversion of dihydroxyacetone phosphate (DHAP) to D-glyceraldehyde-3-phosphate (G3P).</text>
</comment>
<comment type="catalytic activity">
    <reaction evidence="1">
        <text>D-glyceraldehyde 3-phosphate = dihydroxyacetone phosphate</text>
        <dbReference type="Rhea" id="RHEA:18585"/>
        <dbReference type="ChEBI" id="CHEBI:57642"/>
        <dbReference type="ChEBI" id="CHEBI:59776"/>
        <dbReference type="EC" id="5.3.1.1"/>
    </reaction>
</comment>
<comment type="pathway">
    <text evidence="1">Carbohydrate biosynthesis; gluconeogenesis.</text>
</comment>
<comment type="pathway">
    <text evidence="1">Carbohydrate degradation; glycolysis; D-glyceraldehyde 3-phosphate from glycerone phosphate: step 1/1.</text>
</comment>
<comment type="subunit">
    <text evidence="1">Homodimer.</text>
</comment>
<comment type="subcellular location">
    <subcellularLocation>
        <location evidence="1">Cytoplasm</location>
    </subcellularLocation>
</comment>
<comment type="similarity">
    <text evidence="1">Belongs to the triosephosphate isomerase family.</text>
</comment>
<name>TPIS_CHLTA</name>
<protein>
    <recommendedName>
        <fullName evidence="1">Triosephosphate isomerase</fullName>
        <shortName evidence="1">TIM</shortName>
        <shortName evidence="1">TPI</shortName>
        <ecNumber evidence="1">5.3.1.1</ecNumber>
    </recommendedName>
    <alternativeName>
        <fullName evidence="1">Triose-phosphate isomerase</fullName>
    </alternativeName>
</protein>
<sequence length="274" mass="29763">MFTDKETHRKPFPTWAHLLHSEPSKQFVFGNWKMNKTLTEAQTFLKSFISSDILSNPQIITGIIPPFTLLSACQQAVSDSPIFLGAQTTHEADSGAFTGEISAPMLKDIGVDFVLIGHSERRHIFHEQNPVLAEKAAAAIHSGMIPVLCIGETLEEQESGATQDILLNQLTIGLSKLPEQASFILAYEPVWAIGTGKVAHPDLVQETHAFCRKTIASLFSKDIAERTPILYGGSVKADDARSLSLCPDVNGLLVGGASLSSENFLSIIQQVDIP</sequence>
<accession>Q3KM32</accession>
<evidence type="ECO:0000255" key="1">
    <source>
        <dbReference type="HAMAP-Rule" id="MF_00147"/>
    </source>
</evidence>
<organism>
    <name type="scientific">Chlamydia trachomatis serovar A (strain ATCC VR-571B / DSM 19440 / HAR-13)</name>
    <dbReference type="NCBI Taxonomy" id="315277"/>
    <lineage>
        <taxon>Bacteria</taxon>
        <taxon>Pseudomonadati</taxon>
        <taxon>Chlamydiota</taxon>
        <taxon>Chlamydiia</taxon>
        <taxon>Chlamydiales</taxon>
        <taxon>Chlamydiaceae</taxon>
        <taxon>Chlamydia/Chlamydophila group</taxon>
        <taxon>Chlamydia</taxon>
    </lineage>
</organism>
<proteinExistence type="inferred from homology"/>
<keyword id="KW-0963">Cytoplasm</keyword>
<keyword id="KW-0312">Gluconeogenesis</keyword>
<keyword id="KW-0324">Glycolysis</keyword>
<keyword id="KW-0413">Isomerase</keyword>